<accession>B5ENR5</accession>
<proteinExistence type="inferred from homology"/>
<reference key="1">
    <citation type="submission" date="2008-08" db="EMBL/GenBank/DDBJ databases">
        <title>Complete sequence of Acidithiobacillus ferrooxidans ATCC 53993.</title>
        <authorList>
            <person name="Lucas S."/>
            <person name="Copeland A."/>
            <person name="Lapidus A."/>
            <person name="Glavina del Rio T."/>
            <person name="Dalin E."/>
            <person name="Tice H."/>
            <person name="Bruce D."/>
            <person name="Goodwin L."/>
            <person name="Pitluck S."/>
            <person name="Sims D."/>
            <person name="Brettin T."/>
            <person name="Detter J.C."/>
            <person name="Han C."/>
            <person name="Kuske C.R."/>
            <person name="Larimer F."/>
            <person name="Land M."/>
            <person name="Hauser L."/>
            <person name="Kyrpides N."/>
            <person name="Lykidis A."/>
            <person name="Borole A.P."/>
        </authorList>
    </citation>
    <scope>NUCLEOTIDE SEQUENCE [LARGE SCALE GENOMIC DNA]</scope>
    <source>
        <strain>ATCC 53993 / BNL-5-31</strain>
    </source>
</reference>
<dbReference type="EC" id="2.1.1.166" evidence="1"/>
<dbReference type="EMBL" id="CP001132">
    <property type="protein sequence ID" value="ACH84558.1"/>
    <property type="molecule type" value="Genomic_DNA"/>
</dbReference>
<dbReference type="RefSeq" id="WP_009561097.1">
    <property type="nucleotide sequence ID" value="NC_011206.1"/>
</dbReference>
<dbReference type="SMR" id="B5ENR5"/>
<dbReference type="KEGG" id="afe:Lferr_2357"/>
<dbReference type="eggNOG" id="COG0293">
    <property type="taxonomic scope" value="Bacteria"/>
</dbReference>
<dbReference type="HOGENOM" id="CLU_009422_4_0_6"/>
<dbReference type="GO" id="GO:0005737">
    <property type="term" value="C:cytoplasm"/>
    <property type="evidence" value="ECO:0007669"/>
    <property type="project" value="UniProtKB-SubCell"/>
</dbReference>
<dbReference type="GO" id="GO:0008650">
    <property type="term" value="F:rRNA (uridine-2'-O-)-methyltransferase activity"/>
    <property type="evidence" value="ECO:0007669"/>
    <property type="project" value="UniProtKB-UniRule"/>
</dbReference>
<dbReference type="FunFam" id="3.40.50.150:FF:000005">
    <property type="entry name" value="Ribosomal RNA large subunit methyltransferase E"/>
    <property type="match status" value="1"/>
</dbReference>
<dbReference type="Gene3D" id="3.40.50.150">
    <property type="entry name" value="Vaccinia Virus protein VP39"/>
    <property type="match status" value="1"/>
</dbReference>
<dbReference type="HAMAP" id="MF_01547">
    <property type="entry name" value="RNA_methyltr_E"/>
    <property type="match status" value="1"/>
</dbReference>
<dbReference type="InterPro" id="IPR050082">
    <property type="entry name" value="RNA_methyltr_RlmE"/>
</dbReference>
<dbReference type="InterPro" id="IPR002877">
    <property type="entry name" value="RNA_MeTrfase_FtsJ_dom"/>
</dbReference>
<dbReference type="InterPro" id="IPR015507">
    <property type="entry name" value="rRNA-MeTfrase_E"/>
</dbReference>
<dbReference type="InterPro" id="IPR029063">
    <property type="entry name" value="SAM-dependent_MTases_sf"/>
</dbReference>
<dbReference type="PANTHER" id="PTHR10920">
    <property type="entry name" value="RIBOSOMAL RNA METHYLTRANSFERASE"/>
    <property type="match status" value="1"/>
</dbReference>
<dbReference type="PANTHER" id="PTHR10920:SF18">
    <property type="entry name" value="RRNA METHYLTRANSFERASE 2, MITOCHONDRIAL"/>
    <property type="match status" value="1"/>
</dbReference>
<dbReference type="Pfam" id="PF01728">
    <property type="entry name" value="FtsJ"/>
    <property type="match status" value="1"/>
</dbReference>
<dbReference type="PIRSF" id="PIRSF005461">
    <property type="entry name" value="23S_rRNA_mtase"/>
    <property type="match status" value="1"/>
</dbReference>
<dbReference type="SUPFAM" id="SSF53335">
    <property type="entry name" value="S-adenosyl-L-methionine-dependent methyltransferases"/>
    <property type="match status" value="1"/>
</dbReference>
<feature type="chain" id="PRO_1000194966" description="Ribosomal RNA large subunit methyltransferase E">
    <location>
        <begin position="1"/>
        <end position="219"/>
    </location>
</feature>
<feature type="active site" description="Proton acceptor" evidence="1">
    <location>
        <position position="160"/>
    </location>
</feature>
<feature type="binding site" evidence="1">
    <location>
        <position position="60"/>
    </location>
    <ligand>
        <name>S-adenosyl-L-methionine</name>
        <dbReference type="ChEBI" id="CHEBI:59789"/>
    </ligand>
</feature>
<feature type="binding site" evidence="1">
    <location>
        <position position="62"/>
    </location>
    <ligand>
        <name>S-adenosyl-L-methionine</name>
        <dbReference type="ChEBI" id="CHEBI:59789"/>
    </ligand>
</feature>
<feature type="binding site" evidence="1">
    <location>
        <position position="80"/>
    </location>
    <ligand>
        <name>S-adenosyl-L-methionine</name>
        <dbReference type="ChEBI" id="CHEBI:59789"/>
    </ligand>
</feature>
<feature type="binding site" evidence="1">
    <location>
        <position position="96"/>
    </location>
    <ligand>
        <name>S-adenosyl-L-methionine</name>
        <dbReference type="ChEBI" id="CHEBI:59789"/>
    </ligand>
</feature>
<feature type="binding site" evidence="1">
    <location>
        <position position="120"/>
    </location>
    <ligand>
        <name>S-adenosyl-L-methionine</name>
        <dbReference type="ChEBI" id="CHEBI:59789"/>
    </ligand>
</feature>
<comment type="function">
    <text evidence="1">Specifically methylates the uridine in position 2552 of 23S rRNA at the 2'-O position of the ribose in the fully assembled 50S ribosomal subunit.</text>
</comment>
<comment type="catalytic activity">
    <reaction evidence="1">
        <text>uridine(2552) in 23S rRNA + S-adenosyl-L-methionine = 2'-O-methyluridine(2552) in 23S rRNA + S-adenosyl-L-homocysteine + H(+)</text>
        <dbReference type="Rhea" id="RHEA:42720"/>
        <dbReference type="Rhea" id="RHEA-COMP:10202"/>
        <dbReference type="Rhea" id="RHEA-COMP:10203"/>
        <dbReference type="ChEBI" id="CHEBI:15378"/>
        <dbReference type="ChEBI" id="CHEBI:57856"/>
        <dbReference type="ChEBI" id="CHEBI:59789"/>
        <dbReference type="ChEBI" id="CHEBI:65315"/>
        <dbReference type="ChEBI" id="CHEBI:74478"/>
        <dbReference type="EC" id="2.1.1.166"/>
    </reaction>
</comment>
<comment type="subcellular location">
    <subcellularLocation>
        <location evidence="1">Cytoplasm</location>
    </subcellularLocation>
</comment>
<comment type="similarity">
    <text evidence="1">Belongs to the class I-like SAM-binding methyltransferase superfamily. RNA methyltransferase RlmE family.</text>
</comment>
<evidence type="ECO:0000255" key="1">
    <source>
        <dbReference type="HAMAP-Rule" id="MF_01547"/>
    </source>
</evidence>
<keyword id="KW-0963">Cytoplasm</keyword>
<keyword id="KW-0489">Methyltransferase</keyword>
<keyword id="KW-0698">rRNA processing</keyword>
<keyword id="KW-0949">S-adenosyl-L-methionine</keyword>
<keyword id="KW-0808">Transferase</keyword>
<organism>
    <name type="scientific">Acidithiobacillus ferrooxidans (strain ATCC 53993 / BNL-5-31)</name>
    <name type="common">Leptospirillum ferrooxidans (ATCC 53993)</name>
    <dbReference type="NCBI Taxonomy" id="380394"/>
    <lineage>
        <taxon>Bacteria</taxon>
        <taxon>Pseudomonadati</taxon>
        <taxon>Pseudomonadota</taxon>
        <taxon>Acidithiobacillia</taxon>
        <taxon>Acidithiobacillales</taxon>
        <taxon>Acidithiobacillaceae</taxon>
        <taxon>Acidithiobacillus</taxon>
    </lineage>
</organism>
<sequence>MARSKSSEKWLKEHFKDPFVQRAMKEGYRSRASYKLLEIQQKDHLIRPGMRVLDVGAAPGGWTQVAAPLIGRKGRLVAVDRLAMDPVADATVICGDVYDDAILAACQEALPGGADLIMSDMAPNMSGIASVDQARAIDLAELALDMAHRWLVPGGALLIKVFMGSGAEELRRALRRDFKKIVVRKPEASRARSTEQYWLALDFQGVAQERLDNGGASSL</sequence>
<protein>
    <recommendedName>
        <fullName evidence="1">Ribosomal RNA large subunit methyltransferase E</fullName>
        <ecNumber evidence="1">2.1.1.166</ecNumber>
    </recommendedName>
    <alternativeName>
        <fullName evidence="1">23S rRNA Um2552 methyltransferase</fullName>
    </alternativeName>
    <alternativeName>
        <fullName evidence="1">rRNA (uridine-2'-O-)-methyltransferase</fullName>
    </alternativeName>
</protein>
<gene>
    <name evidence="1" type="primary">rlmE</name>
    <name evidence="1" type="synonym">ftsJ</name>
    <name evidence="1" type="synonym">rrmJ</name>
    <name type="ordered locus">Lferr_2357</name>
</gene>
<name>RLME_ACIF5</name>